<feature type="chain" id="PRO_0000178569" description="Large ribosomal subunit protein bL28">
    <location>
        <begin position="1"/>
        <end position="62"/>
    </location>
</feature>
<reference key="1">
    <citation type="journal article" date="2004" name="Nat. Biotechnol.">
        <title>Complete sequence and comparative genome analysis of the dairy bacterium Streptococcus thermophilus.</title>
        <authorList>
            <person name="Bolotin A."/>
            <person name="Quinquis B."/>
            <person name="Renault P."/>
            <person name="Sorokin A."/>
            <person name="Ehrlich S.D."/>
            <person name="Kulakauskas S."/>
            <person name="Lapidus A."/>
            <person name="Goltsman E."/>
            <person name="Mazur M."/>
            <person name="Pusch G.D."/>
            <person name="Fonstein M."/>
            <person name="Overbeek R."/>
            <person name="Kyprides N."/>
            <person name="Purnelle B."/>
            <person name="Prozzi D."/>
            <person name="Ngui K."/>
            <person name="Masuy D."/>
            <person name="Hancy F."/>
            <person name="Burteau S."/>
            <person name="Boutry M."/>
            <person name="Delcour J."/>
            <person name="Goffeau A."/>
            <person name="Hols P."/>
        </authorList>
    </citation>
    <scope>NUCLEOTIDE SEQUENCE [LARGE SCALE GENOMIC DNA]</scope>
    <source>
        <strain>CNRZ 1066</strain>
    </source>
</reference>
<sequence>MAKVCYFTGRKTVSGNNRSHAMNKTKRVVKPNLQKVTVLIDGKPKKVWASARALKSGKVERV</sequence>
<evidence type="ECO:0000255" key="1">
    <source>
        <dbReference type="HAMAP-Rule" id="MF_00373"/>
    </source>
</evidence>
<evidence type="ECO:0000305" key="2"/>
<dbReference type="EMBL" id="CP000024">
    <property type="protein sequence ID" value="AAV63470.1"/>
    <property type="molecule type" value="Genomic_DNA"/>
</dbReference>
<dbReference type="RefSeq" id="WP_002952184.1">
    <property type="nucleotide sequence ID" value="NC_006449.1"/>
</dbReference>
<dbReference type="SMR" id="Q5LXP2"/>
<dbReference type="GeneID" id="66899685"/>
<dbReference type="KEGG" id="stc:str1958"/>
<dbReference type="HOGENOM" id="CLU_064548_7_1_9"/>
<dbReference type="GO" id="GO:1990904">
    <property type="term" value="C:ribonucleoprotein complex"/>
    <property type="evidence" value="ECO:0007669"/>
    <property type="project" value="UniProtKB-KW"/>
</dbReference>
<dbReference type="GO" id="GO:0005840">
    <property type="term" value="C:ribosome"/>
    <property type="evidence" value="ECO:0007669"/>
    <property type="project" value="UniProtKB-KW"/>
</dbReference>
<dbReference type="GO" id="GO:0003735">
    <property type="term" value="F:structural constituent of ribosome"/>
    <property type="evidence" value="ECO:0007669"/>
    <property type="project" value="InterPro"/>
</dbReference>
<dbReference type="GO" id="GO:0006412">
    <property type="term" value="P:translation"/>
    <property type="evidence" value="ECO:0007669"/>
    <property type="project" value="UniProtKB-UniRule"/>
</dbReference>
<dbReference type="Gene3D" id="2.30.170.40">
    <property type="entry name" value="Ribosomal protein L28/L24"/>
    <property type="match status" value="1"/>
</dbReference>
<dbReference type="HAMAP" id="MF_00373">
    <property type="entry name" value="Ribosomal_bL28"/>
    <property type="match status" value="1"/>
</dbReference>
<dbReference type="InterPro" id="IPR050096">
    <property type="entry name" value="Bacterial_rp_bL28"/>
</dbReference>
<dbReference type="InterPro" id="IPR026569">
    <property type="entry name" value="Ribosomal_bL28"/>
</dbReference>
<dbReference type="InterPro" id="IPR034704">
    <property type="entry name" value="Ribosomal_bL28/bL31-like_sf"/>
</dbReference>
<dbReference type="InterPro" id="IPR001383">
    <property type="entry name" value="Ribosomal_bL28_bact-type"/>
</dbReference>
<dbReference type="InterPro" id="IPR037147">
    <property type="entry name" value="Ribosomal_bL28_sf"/>
</dbReference>
<dbReference type="NCBIfam" id="TIGR00009">
    <property type="entry name" value="L28"/>
    <property type="match status" value="1"/>
</dbReference>
<dbReference type="PANTHER" id="PTHR39080">
    <property type="entry name" value="50S RIBOSOMAL PROTEIN L28"/>
    <property type="match status" value="1"/>
</dbReference>
<dbReference type="PANTHER" id="PTHR39080:SF1">
    <property type="entry name" value="LARGE RIBOSOMAL SUBUNIT PROTEIN BL28A"/>
    <property type="match status" value="1"/>
</dbReference>
<dbReference type="Pfam" id="PF00830">
    <property type="entry name" value="Ribosomal_L28"/>
    <property type="match status" value="1"/>
</dbReference>
<dbReference type="SUPFAM" id="SSF143800">
    <property type="entry name" value="L28p-like"/>
    <property type="match status" value="1"/>
</dbReference>
<accession>Q5LXP2</accession>
<name>RL28_STRT1</name>
<organism>
    <name type="scientific">Streptococcus thermophilus (strain CNRZ 1066)</name>
    <dbReference type="NCBI Taxonomy" id="299768"/>
    <lineage>
        <taxon>Bacteria</taxon>
        <taxon>Bacillati</taxon>
        <taxon>Bacillota</taxon>
        <taxon>Bacilli</taxon>
        <taxon>Lactobacillales</taxon>
        <taxon>Streptococcaceae</taxon>
        <taxon>Streptococcus</taxon>
    </lineage>
</organism>
<gene>
    <name evidence="1" type="primary">rpmB</name>
    <name type="ordered locus">str1958</name>
</gene>
<protein>
    <recommendedName>
        <fullName evidence="1">Large ribosomal subunit protein bL28</fullName>
    </recommendedName>
    <alternativeName>
        <fullName evidence="2">50S ribosomal protein L28</fullName>
    </alternativeName>
</protein>
<keyword id="KW-0687">Ribonucleoprotein</keyword>
<keyword id="KW-0689">Ribosomal protein</keyword>
<proteinExistence type="inferred from homology"/>
<comment type="similarity">
    <text evidence="1">Belongs to the bacterial ribosomal protein bL28 family.</text>
</comment>